<accession>Q66CE1</accession>
<organism>
    <name type="scientific">Yersinia pseudotuberculosis serotype I (strain IP32953)</name>
    <dbReference type="NCBI Taxonomy" id="273123"/>
    <lineage>
        <taxon>Bacteria</taxon>
        <taxon>Pseudomonadati</taxon>
        <taxon>Pseudomonadota</taxon>
        <taxon>Gammaproteobacteria</taxon>
        <taxon>Enterobacterales</taxon>
        <taxon>Yersiniaceae</taxon>
        <taxon>Yersinia</taxon>
    </lineage>
</organism>
<dbReference type="EMBL" id="BX936398">
    <property type="protein sequence ID" value="CAH20702.1"/>
    <property type="status" value="ALT_INIT"/>
    <property type="molecule type" value="Genomic_DNA"/>
</dbReference>
<dbReference type="RefSeq" id="WP_002213054.1">
    <property type="nucleotide sequence ID" value="NZ_CP009712.1"/>
</dbReference>
<dbReference type="SMR" id="Q66CE1"/>
<dbReference type="GeneID" id="57977119"/>
<dbReference type="KEGG" id="ypo:BZ17_1056"/>
<dbReference type="KEGG" id="yps:YPTB1462"/>
<dbReference type="PATRIC" id="fig|273123.14.peg.1121"/>
<dbReference type="Proteomes" id="UP000001011">
    <property type="component" value="Chromosome"/>
</dbReference>
<dbReference type="GO" id="GO:0005737">
    <property type="term" value="C:cytoplasm"/>
    <property type="evidence" value="ECO:0007669"/>
    <property type="project" value="UniProtKB-SubCell"/>
</dbReference>
<dbReference type="GO" id="GO:0003677">
    <property type="term" value="F:DNA binding"/>
    <property type="evidence" value="ECO:0007669"/>
    <property type="project" value="InterPro"/>
</dbReference>
<dbReference type="GO" id="GO:0009408">
    <property type="term" value="P:response to heat"/>
    <property type="evidence" value="ECO:0007669"/>
    <property type="project" value="UniProtKB-UniRule"/>
</dbReference>
<dbReference type="Gene3D" id="2.30.30.390">
    <property type="entry name" value="Hemimethylated DNA-binding domain"/>
    <property type="match status" value="1"/>
</dbReference>
<dbReference type="HAMAP" id="MF_01194">
    <property type="entry name" value="HspQ"/>
    <property type="match status" value="1"/>
</dbReference>
<dbReference type="InterPro" id="IPR011722">
    <property type="entry name" value="Hemimethylated_DNA-bd_dom"/>
</dbReference>
<dbReference type="InterPro" id="IPR036623">
    <property type="entry name" value="Hemimethylated_DNA-bd_sf"/>
</dbReference>
<dbReference type="InterPro" id="IPR022866">
    <property type="entry name" value="HspQ"/>
</dbReference>
<dbReference type="NCBIfam" id="NF010729">
    <property type="entry name" value="PRK14129.1"/>
    <property type="match status" value="1"/>
</dbReference>
<dbReference type="NCBIfam" id="TIGR02097">
    <property type="entry name" value="yccV"/>
    <property type="match status" value="1"/>
</dbReference>
<dbReference type="Pfam" id="PF08755">
    <property type="entry name" value="YccV-like"/>
    <property type="match status" value="1"/>
</dbReference>
<dbReference type="SMART" id="SM00992">
    <property type="entry name" value="YccV-like"/>
    <property type="match status" value="1"/>
</dbReference>
<dbReference type="SUPFAM" id="SSF141255">
    <property type="entry name" value="YccV-like"/>
    <property type="match status" value="1"/>
</dbReference>
<sequence>MIASKFGIGQQVRHSLHGYLGVVIDIDPEYSLAPPEPDEVANNKTLRSSPWYHVVIEDDDGQPVHTYLAEAQLTYEDVDAHPEQPSLDELAASIRHQLQAPHLRN</sequence>
<feature type="chain" id="PRO_0000315324" description="Heat shock protein HspQ">
    <location>
        <begin position="1"/>
        <end position="105"/>
    </location>
</feature>
<feature type="region of interest" description="Disordered" evidence="2">
    <location>
        <begin position="80"/>
        <end position="105"/>
    </location>
</feature>
<evidence type="ECO:0000255" key="1">
    <source>
        <dbReference type="HAMAP-Rule" id="MF_01194"/>
    </source>
</evidence>
<evidence type="ECO:0000256" key="2">
    <source>
        <dbReference type="SAM" id="MobiDB-lite"/>
    </source>
</evidence>
<evidence type="ECO:0000305" key="3"/>
<gene>
    <name evidence="1" type="primary">hspQ</name>
    <name type="ordered locus">YPTB1462</name>
</gene>
<name>HSPQ_YERPS</name>
<keyword id="KW-0963">Cytoplasm</keyword>
<keyword id="KW-0346">Stress response</keyword>
<comment type="function">
    <text evidence="1">Involved in the degradation of certain denaturated proteins, including DnaA, during heat shock stress.</text>
</comment>
<comment type="subcellular location">
    <subcellularLocation>
        <location evidence="1">Cytoplasm</location>
    </subcellularLocation>
</comment>
<comment type="similarity">
    <text evidence="1">Belongs to the HspQ family.</text>
</comment>
<comment type="sequence caution" evidence="3">
    <conflict type="erroneous initiation">
        <sequence resource="EMBL-CDS" id="CAH20702"/>
    </conflict>
</comment>
<reference key="1">
    <citation type="journal article" date="2004" name="Proc. Natl. Acad. Sci. U.S.A.">
        <title>Insights into the evolution of Yersinia pestis through whole-genome comparison with Yersinia pseudotuberculosis.</title>
        <authorList>
            <person name="Chain P.S.G."/>
            <person name="Carniel E."/>
            <person name="Larimer F.W."/>
            <person name="Lamerdin J."/>
            <person name="Stoutland P.O."/>
            <person name="Regala W.M."/>
            <person name="Georgescu A.M."/>
            <person name="Vergez L.M."/>
            <person name="Land M.L."/>
            <person name="Motin V.L."/>
            <person name="Brubaker R.R."/>
            <person name="Fowler J."/>
            <person name="Hinnebusch J."/>
            <person name="Marceau M."/>
            <person name="Medigue C."/>
            <person name="Simonet M."/>
            <person name="Chenal-Francisque V."/>
            <person name="Souza B."/>
            <person name="Dacheux D."/>
            <person name="Elliott J.M."/>
            <person name="Derbise A."/>
            <person name="Hauser L.J."/>
            <person name="Garcia E."/>
        </authorList>
    </citation>
    <scope>NUCLEOTIDE SEQUENCE [LARGE SCALE GENOMIC DNA]</scope>
    <source>
        <strain>IP32953</strain>
    </source>
</reference>
<protein>
    <recommendedName>
        <fullName evidence="1">Heat shock protein HspQ</fullName>
    </recommendedName>
</protein>
<proteinExistence type="inferred from homology"/>